<protein>
    <recommendedName>
        <fullName evidence="7">M cell-type agglutination protein mam3</fullName>
    </recommendedName>
    <alternativeName>
        <fullName evidence="6">Adhesin mam3</fullName>
    </alternativeName>
</protein>
<gene>
    <name evidence="5" type="primary">mam3</name>
    <name evidence="9" type="ORF">SPAP11E10.02c</name>
    <name type="ORF">SPAPB1A10.01c</name>
</gene>
<keyword id="KW-0184">Conjugation</keyword>
<keyword id="KW-0325">Glycoprotein</keyword>
<keyword id="KW-1185">Reference proteome</keyword>
<keyword id="KW-0677">Repeat</keyword>
<keyword id="KW-0732">Signal</keyword>
<reference key="1">
    <citation type="journal article" date="2002" name="Nature">
        <title>The genome sequence of Schizosaccharomyces pombe.</title>
        <authorList>
            <person name="Wood V."/>
            <person name="Gwilliam R."/>
            <person name="Rajandream M.A."/>
            <person name="Lyne M.H."/>
            <person name="Lyne R."/>
            <person name="Stewart A."/>
            <person name="Sgouros J.G."/>
            <person name="Peat N."/>
            <person name="Hayles J."/>
            <person name="Baker S.G."/>
            <person name="Basham D."/>
            <person name="Bowman S."/>
            <person name="Brooks K."/>
            <person name="Brown D."/>
            <person name="Brown S."/>
            <person name="Chillingworth T."/>
            <person name="Churcher C.M."/>
            <person name="Collins M."/>
            <person name="Connor R."/>
            <person name="Cronin A."/>
            <person name="Davis P."/>
            <person name="Feltwell T."/>
            <person name="Fraser A."/>
            <person name="Gentles S."/>
            <person name="Goble A."/>
            <person name="Hamlin N."/>
            <person name="Harris D.E."/>
            <person name="Hidalgo J."/>
            <person name="Hodgson G."/>
            <person name="Holroyd S."/>
            <person name="Hornsby T."/>
            <person name="Howarth S."/>
            <person name="Huckle E.J."/>
            <person name="Hunt S."/>
            <person name="Jagels K."/>
            <person name="James K.D."/>
            <person name="Jones L."/>
            <person name="Jones M."/>
            <person name="Leather S."/>
            <person name="McDonald S."/>
            <person name="McLean J."/>
            <person name="Mooney P."/>
            <person name="Moule S."/>
            <person name="Mungall K.L."/>
            <person name="Murphy L.D."/>
            <person name="Niblett D."/>
            <person name="Odell C."/>
            <person name="Oliver K."/>
            <person name="O'Neil S."/>
            <person name="Pearson D."/>
            <person name="Quail M.A."/>
            <person name="Rabbinowitsch E."/>
            <person name="Rutherford K.M."/>
            <person name="Rutter S."/>
            <person name="Saunders D."/>
            <person name="Seeger K."/>
            <person name="Sharp S."/>
            <person name="Skelton J."/>
            <person name="Simmonds M.N."/>
            <person name="Squares R."/>
            <person name="Squares S."/>
            <person name="Stevens K."/>
            <person name="Taylor K."/>
            <person name="Taylor R.G."/>
            <person name="Tivey A."/>
            <person name="Walsh S.V."/>
            <person name="Warren T."/>
            <person name="Whitehead S."/>
            <person name="Woodward J.R."/>
            <person name="Volckaert G."/>
            <person name="Aert R."/>
            <person name="Robben J."/>
            <person name="Grymonprez B."/>
            <person name="Weltjens I."/>
            <person name="Vanstreels E."/>
            <person name="Rieger M."/>
            <person name="Schaefer M."/>
            <person name="Mueller-Auer S."/>
            <person name="Gabel C."/>
            <person name="Fuchs M."/>
            <person name="Duesterhoeft A."/>
            <person name="Fritzc C."/>
            <person name="Holzer E."/>
            <person name="Moestl D."/>
            <person name="Hilbert H."/>
            <person name="Borzym K."/>
            <person name="Langer I."/>
            <person name="Beck A."/>
            <person name="Lehrach H."/>
            <person name="Reinhardt R."/>
            <person name="Pohl T.M."/>
            <person name="Eger P."/>
            <person name="Zimmermann W."/>
            <person name="Wedler H."/>
            <person name="Wambutt R."/>
            <person name="Purnelle B."/>
            <person name="Goffeau A."/>
            <person name="Cadieu E."/>
            <person name="Dreano S."/>
            <person name="Gloux S."/>
            <person name="Lelaure V."/>
            <person name="Mottier S."/>
            <person name="Galibert F."/>
            <person name="Aves S.J."/>
            <person name="Xiang Z."/>
            <person name="Hunt C."/>
            <person name="Moore K."/>
            <person name="Hurst S.M."/>
            <person name="Lucas M."/>
            <person name="Rochet M."/>
            <person name="Gaillardin C."/>
            <person name="Tallada V.A."/>
            <person name="Garzon A."/>
            <person name="Thode G."/>
            <person name="Daga R.R."/>
            <person name="Cruzado L."/>
            <person name="Jimenez J."/>
            <person name="Sanchez M."/>
            <person name="del Rey F."/>
            <person name="Benito J."/>
            <person name="Dominguez A."/>
            <person name="Revuelta J.L."/>
            <person name="Moreno S."/>
            <person name="Armstrong J."/>
            <person name="Forsburg S.L."/>
            <person name="Cerutti L."/>
            <person name="Lowe T."/>
            <person name="McCombie W.R."/>
            <person name="Paulsen I."/>
            <person name="Potashkin J."/>
            <person name="Shpakovski G.V."/>
            <person name="Ussery D."/>
            <person name="Barrell B.G."/>
            <person name="Nurse P."/>
        </authorList>
    </citation>
    <scope>NUCLEOTIDE SEQUENCE [LARGE SCALE GENOMIC DNA]</scope>
    <source>
        <strain>972 / ATCC 24843</strain>
    </source>
</reference>
<reference key="2">
    <citation type="journal article" date="2006" name="Nat. Biotechnol.">
        <title>ORFeome cloning and global analysis of protein localization in the fission yeast Schizosaccharomyces pombe.</title>
        <authorList>
            <person name="Matsuyama A."/>
            <person name="Arai R."/>
            <person name="Yashiroda Y."/>
            <person name="Shirai A."/>
            <person name="Kamata A."/>
            <person name="Sekido S."/>
            <person name="Kobayashi Y."/>
            <person name="Hashimoto A."/>
            <person name="Hamamoto M."/>
            <person name="Hiraoka Y."/>
            <person name="Horinouchi S."/>
            <person name="Yoshida M."/>
        </authorList>
    </citation>
    <scope>SUBCELLULAR LOCATION [LARGE SCALE ANALYSIS]</scope>
</reference>
<reference key="3">
    <citation type="journal article" date="2006" name="Proc. Natl. Acad. Sci. U.S.A.">
        <title>Global roles of Ste11p, cell type, and pheromone in the control of gene expression during early sexual differentiation in fission yeast.</title>
        <authorList>
            <person name="Mata J."/>
            <person name="Baehler J."/>
        </authorList>
    </citation>
    <scope>FUNCTION</scope>
</reference>
<reference key="4">
    <citation type="journal article" date="2008" name="Fungal Genet. Biol.">
        <title>Molecular phylogenetics of ascomycotal adhesins--a novel family of putative cell-surface adhesive proteins in fission yeasts.</title>
        <authorList>
            <person name="Linder T."/>
            <person name="Gustafsson C.M."/>
        </authorList>
    </citation>
    <scope>REPEATS</scope>
</reference>
<dbReference type="EMBL" id="CU329670">
    <property type="protein sequence ID" value="CAC19750.2"/>
    <property type="molecule type" value="Genomic_DNA"/>
</dbReference>
<dbReference type="RefSeq" id="XP_001713059.1">
    <property type="nucleotide sequence ID" value="XM_001713007.2"/>
</dbReference>
<dbReference type="BioGRID" id="280593">
    <property type="interactions" value="12"/>
</dbReference>
<dbReference type="STRING" id="284812.Q9HDY9"/>
<dbReference type="GlyCosmos" id="Q9HDY9">
    <property type="glycosylation" value="11 sites, No reported glycans"/>
</dbReference>
<dbReference type="PaxDb" id="4896-SPAP11E10.02c.1"/>
<dbReference type="EnsemblFungi" id="SPAP11E10.02c.1">
    <property type="protein sequence ID" value="SPAP11E10.02c.1:pep"/>
    <property type="gene ID" value="SPAP11E10.02c"/>
</dbReference>
<dbReference type="PomBase" id="SPAP11E10.02c">
    <property type="gene designation" value="mam3"/>
</dbReference>
<dbReference type="VEuPathDB" id="FungiDB:SPAP11E10.02c"/>
<dbReference type="HOGENOM" id="CLU_285927_0_0_1"/>
<dbReference type="InParanoid" id="Q9HDY9"/>
<dbReference type="OMA" id="AWTTKTI"/>
<dbReference type="PRO" id="PR:Q9HDY9"/>
<dbReference type="Proteomes" id="UP000002485">
    <property type="component" value="Chromosome I"/>
</dbReference>
<dbReference type="GO" id="GO:0005737">
    <property type="term" value="C:cytoplasm"/>
    <property type="evidence" value="ECO:0007005"/>
    <property type="project" value="PomBase"/>
</dbReference>
<dbReference type="GO" id="GO:0070263">
    <property type="term" value="C:external side of fungal-type cell wall"/>
    <property type="evidence" value="ECO:0000315"/>
    <property type="project" value="PomBase"/>
</dbReference>
<dbReference type="GO" id="GO:0000747">
    <property type="term" value="P:conjugation with cellular fusion"/>
    <property type="evidence" value="ECO:0000315"/>
    <property type="project" value="PomBase"/>
</dbReference>
<dbReference type="GO" id="GO:0000128">
    <property type="term" value="P:flocculation"/>
    <property type="evidence" value="ECO:0000318"/>
    <property type="project" value="GO_Central"/>
</dbReference>
<dbReference type="InterPro" id="IPR051905">
    <property type="entry name" value="S_pombe_Mam3/Map4"/>
</dbReference>
<dbReference type="PANTHER" id="PTHR31492">
    <property type="entry name" value="M CELL-TYPE AGGLUTINATION PROTEIN MAM3-RELATED"/>
    <property type="match status" value="1"/>
</dbReference>
<dbReference type="PANTHER" id="PTHR31492:SF14">
    <property type="entry name" value="M CELL-TYPE AGGLUTINATION PROTEIN MAM3-RELATED"/>
    <property type="match status" value="1"/>
</dbReference>
<comment type="function">
    <text evidence="4">M cell-type specific protein involved in agglutination during conjugation.</text>
</comment>
<comment type="subcellular location">
    <subcellularLocation>
        <location evidence="3">Cell surface</location>
    </subcellularLocation>
</comment>
<comment type="similarity">
    <text evidence="7">Belongs to the mam3/map4 family.</text>
</comment>
<organism>
    <name type="scientific">Schizosaccharomyces pombe (strain 972 / ATCC 24843)</name>
    <name type="common">Fission yeast</name>
    <dbReference type="NCBI Taxonomy" id="284812"/>
    <lineage>
        <taxon>Eukaryota</taxon>
        <taxon>Fungi</taxon>
        <taxon>Dikarya</taxon>
        <taxon>Ascomycota</taxon>
        <taxon>Taphrinomycotina</taxon>
        <taxon>Schizosaccharomycetes</taxon>
        <taxon>Schizosaccharomycetales</taxon>
        <taxon>Schizosaccharomycetaceae</taxon>
        <taxon>Schizosaccharomyces</taxon>
    </lineage>
</organism>
<evidence type="ECO:0000255" key="1"/>
<evidence type="ECO:0000256" key="2">
    <source>
        <dbReference type="SAM" id="MobiDB-lite"/>
    </source>
</evidence>
<evidence type="ECO:0000269" key="3">
    <source>
    </source>
</evidence>
<evidence type="ECO:0000269" key="4">
    <source>
    </source>
</evidence>
<evidence type="ECO:0000303" key="5">
    <source>
    </source>
</evidence>
<evidence type="ECO:0000303" key="6">
    <source>
    </source>
</evidence>
<evidence type="ECO:0000305" key="7"/>
<evidence type="ECO:0000305" key="8">
    <source>
    </source>
</evidence>
<evidence type="ECO:0000312" key="9">
    <source>
        <dbReference type="PomBase" id="SPAP11E10.02c"/>
    </source>
</evidence>
<sequence>MSIALAFFILVLLGFSWASPSALDDTFNVSRSVGLISSSNLESCQSSPLEVGNIYNSTSASEILSTLDAKYITIIGVIGSSNSSIQDLIDSVGNSNNAASSNPTSTVTEYVDRVQTVTEYVTLSCGQAFTSTVDISSSTSSSVINSPTGTAVSSQISTLSMSPSSTPVFSPSASVSSKVASSVSYVSSEPSDSSSSTNTVILTTSVNSPAVSSSETLTSVSITSTESAYTSSSVDIAASTTASSTLPVSTSEATVSFSTDIPATPSTLSSPASSSSSYLVETSSTLTDSVFTTVTATSDSSVITYTLINSVTSSSETTNLPSSSSSLVTIGESSFPSSLLSLLTQSFSTVRSTSSSSTDQLTSASPISSSVISPSVSSPTSSILTNSGSIKSGDHQIVTTSFVQTTTHGSQVETLTYVTTLTETILTTTYDSHTFLTTITPSPSNSISYTNNTFIPSSSIKSSIVYSVTPTSAENYTSSEAFSTSSSLVVIPPVNSSLVTSSTSFTKFSSLSSSQLSTENFTSASSSLSLTNAKSSLSTPSTTIPTSNSSVSLQTSSSLIISSPIISSSLTATSTSTPALTHSITPSNTSYTSSLIPSSSTDYSSSLITVCSNVTSEISSTSLASLISTLTSQQISSNKSSEFVGQTTTEYTTSGSVGFTTTLATQSGSVPGTVLVDVPTPSWITETVTSGSVGFTTTIATPIGTTAGTVLVDIPTPSWVTETVTSGSIGFTTTIATPIGSTAGTVLVDVPTPSWVTETVTSGSVGFTTTIATPIGSTAGTVLVDIPTPSWVTETVTSGSVGFTTTIATPVGTTAGTVLVDIPTPSWVTETVTSGSVGFTTTIATPVGTTAGTVVVDVPTPSWVTETVTSGSVGFTTTIATPIGSTAGTVLVDIPTPSWVTETVTSGSVGFTTTIATPVGTTAGTVLVDIPTPSWVTETVTSGSVGFTTTIATPIGTTAGTVLVDIPTPSWVTETVTSGSVGFTTTIATPVGTTAGTVLVDIPTPSWVTETVTSGSVGFTTTIATPIGTTAGTVLVDIPQQHATTTTTTTFDGFSGYTSSYTGSITETIVIGTPHHSVVDVS</sequence>
<feature type="signal peptide" evidence="1">
    <location>
        <begin position="1"/>
        <end position="18"/>
    </location>
</feature>
<feature type="chain" id="PRO_0000014210" description="M cell-type agglutination protein mam3">
    <location>
        <begin position="19"/>
        <end position="1082"/>
    </location>
</feature>
<feature type="repeat" description="1" evidence="8">
    <location>
        <begin position="646"/>
        <end position="681"/>
    </location>
</feature>
<feature type="repeat" description="2" evidence="8">
    <location>
        <begin position="682"/>
        <end position="717"/>
    </location>
</feature>
<feature type="repeat" description="3" evidence="8">
    <location>
        <begin position="718"/>
        <end position="753"/>
    </location>
</feature>
<feature type="repeat" description="4" evidence="8">
    <location>
        <begin position="754"/>
        <end position="789"/>
    </location>
</feature>
<feature type="repeat" description="5" evidence="8">
    <location>
        <begin position="790"/>
        <end position="825"/>
    </location>
</feature>
<feature type="repeat" description="6" evidence="8">
    <location>
        <begin position="826"/>
        <end position="861"/>
    </location>
</feature>
<feature type="repeat" description="7" evidence="8">
    <location>
        <begin position="862"/>
        <end position="897"/>
    </location>
</feature>
<feature type="repeat" description="8" evidence="8">
    <location>
        <begin position="898"/>
        <end position="933"/>
    </location>
</feature>
<feature type="repeat" description="9" evidence="8">
    <location>
        <begin position="934"/>
        <end position="969"/>
    </location>
</feature>
<feature type="repeat" description="10" evidence="8">
    <location>
        <begin position="970"/>
        <end position="1005"/>
    </location>
</feature>
<feature type="repeat" description="11" evidence="8">
    <location>
        <begin position="1006"/>
        <end position="1041"/>
    </location>
</feature>
<feature type="region of interest" description="Disordered" evidence="2">
    <location>
        <begin position="353"/>
        <end position="374"/>
    </location>
</feature>
<feature type="region of interest" description="11 X 36 AA approximate tandem repeats" evidence="8">
    <location>
        <begin position="720"/>
        <end position="1043"/>
    </location>
</feature>
<feature type="glycosylation site" description="N-linked (GlcNAc...) asparagine" evidence="1">
    <location>
        <position position="28"/>
    </location>
</feature>
<feature type="glycosylation site" description="N-linked (GlcNAc...) asparagine" evidence="1">
    <location>
        <position position="56"/>
    </location>
</feature>
<feature type="glycosylation site" description="N-linked (GlcNAc...) asparagine" evidence="1">
    <location>
        <position position="82"/>
    </location>
</feature>
<feature type="glycosylation site" description="N-linked (GlcNAc...) asparagine" evidence="1">
    <location>
        <position position="451"/>
    </location>
</feature>
<feature type="glycosylation site" description="N-linked (GlcNAc...) asparagine" evidence="1">
    <location>
        <position position="475"/>
    </location>
</feature>
<feature type="glycosylation site" description="N-linked (GlcNAc...) asparagine" evidence="1">
    <location>
        <position position="495"/>
    </location>
</feature>
<feature type="glycosylation site" description="N-linked (GlcNAc...) asparagine" evidence="1">
    <location>
        <position position="520"/>
    </location>
</feature>
<feature type="glycosylation site" description="N-linked (GlcNAc...) asparagine" evidence="1">
    <location>
        <position position="548"/>
    </location>
</feature>
<feature type="glycosylation site" description="N-linked (GlcNAc...) asparagine" evidence="1">
    <location>
        <position position="588"/>
    </location>
</feature>
<feature type="glycosylation site" description="N-linked (GlcNAc...) asparagine" evidence="1">
    <location>
        <position position="613"/>
    </location>
</feature>
<feature type="glycosylation site" description="N-linked (GlcNAc...) asparagine" evidence="1">
    <location>
        <position position="638"/>
    </location>
</feature>
<proteinExistence type="inferred from homology"/>
<name>MAM3_SCHPO</name>
<accession>Q9HDY9</accession>
<accession>Q9HDY8</accession>